<feature type="chain" id="PRO_0000112914" description="Ornithine carbamoyltransferase">
    <location>
        <begin position="1"/>
        <end position="319"/>
    </location>
</feature>
<feature type="binding site" evidence="2">
    <location>
        <begin position="55"/>
        <end position="58"/>
    </location>
    <ligand>
        <name>carbamoyl phosphate</name>
        <dbReference type="ChEBI" id="CHEBI:58228"/>
    </ligand>
</feature>
<feature type="binding site" evidence="2">
    <location>
        <position position="82"/>
    </location>
    <ligand>
        <name>carbamoyl phosphate</name>
        <dbReference type="ChEBI" id="CHEBI:58228"/>
    </ligand>
</feature>
<feature type="binding site" evidence="2">
    <location>
        <position position="106"/>
    </location>
    <ligand>
        <name>carbamoyl phosphate</name>
        <dbReference type="ChEBI" id="CHEBI:58228"/>
    </ligand>
</feature>
<feature type="binding site" evidence="2">
    <location>
        <begin position="133"/>
        <end position="136"/>
    </location>
    <ligand>
        <name>carbamoyl phosphate</name>
        <dbReference type="ChEBI" id="CHEBI:58228"/>
    </ligand>
</feature>
<feature type="binding site" evidence="2">
    <location>
        <position position="171"/>
    </location>
    <ligand>
        <name>L-ornithine</name>
        <dbReference type="ChEBI" id="CHEBI:46911"/>
    </ligand>
</feature>
<feature type="binding site" evidence="2">
    <location>
        <position position="234"/>
    </location>
    <ligand>
        <name>L-ornithine</name>
        <dbReference type="ChEBI" id="CHEBI:46911"/>
    </ligand>
</feature>
<feature type="binding site" evidence="2">
    <location>
        <begin position="238"/>
        <end position="239"/>
    </location>
    <ligand>
        <name>L-ornithine</name>
        <dbReference type="ChEBI" id="CHEBI:46911"/>
    </ligand>
</feature>
<feature type="binding site" evidence="2">
    <location>
        <begin position="274"/>
        <end position="275"/>
    </location>
    <ligand>
        <name>carbamoyl phosphate</name>
        <dbReference type="ChEBI" id="CHEBI:58228"/>
    </ligand>
</feature>
<feature type="binding site" evidence="2">
    <location>
        <position position="302"/>
    </location>
    <ligand>
        <name>carbamoyl phosphate</name>
        <dbReference type="ChEBI" id="CHEBI:58228"/>
    </ligand>
</feature>
<name>OTC_CORGL</name>
<protein>
    <recommendedName>
        <fullName>Ornithine carbamoyltransferase</fullName>
        <shortName>OTCase</shortName>
        <ecNumber>2.1.3.3</ecNumber>
    </recommendedName>
</protein>
<evidence type="ECO:0000250" key="1"/>
<evidence type="ECO:0000255" key="2">
    <source>
        <dbReference type="HAMAP-Rule" id="MF_01109"/>
    </source>
</evidence>
<evidence type="ECO:0000305" key="3"/>
<accession>Q59283</accession>
<proteinExistence type="inferred from homology"/>
<sequence>MTSQPQVRHFLADDDLTPAEQAEVLTLAAKLKAAPFSERPLEGPKSVAVLFDKTSTRTRFSFDAGIAHLGGHAIVVDSGSSQMGKGESLQDTAAVLSRYVEAIVWRTYAHSNFHAMAETSTVPLVNSLSDDLHPCQILADLQTIVENLSPEEGPAGLKGKKAVYLGDGDNNMANSYMIGFATAGMDISIIAPEGFQPRAEFVERAEKRGQETGAKVVVTDSLDEVAGADVVITDTWVSMGMENDGIDRTTPFVPYQVNDEVMAKANDGAIFLHCLPAYRGKEVAASVIDGPASKVFDEAENRLHAQKALLVWLLANQPR</sequence>
<comment type="function">
    <text evidence="1">Reversibly catalyzes the transfer of the carbamoyl group from carbamoyl phosphate (CP) to the N(epsilon) atom of ornithine (ORN) to produce L-citrulline.</text>
</comment>
<comment type="catalytic activity">
    <reaction>
        <text>carbamoyl phosphate + L-ornithine = L-citrulline + phosphate + H(+)</text>
        <dbReference type="Rhea" id="RHEA:19513"/>
        <dbReference type="ChEBI" id="CHEBI:15378"/>
        <dbReference type="ChEBI" id="CHEBI:43474"/>
        <dbReference type="ChEBI" id="CHEBI:46911"/>
        <dbReference type="ChEBI" id="CHEBI:57743"/>
        <dbReference type="ChEBI" id="CHEBI:58228"/>
        <dbReference type="EC" id="2.1.3.3"/>
    </reaction>
</comment>
<comment type="pathway">
    <text>Amino-acid biosynthesis; L-arginine biosynthesis; L-arginine from L-ornithine and carbamoyl phosphate: step 1/3.</text>
</comment>
<comment type="subcellular location">
    <subcellularLocation>
        <location evidence="3">Cytoplasm</location>
    </subcellularLocation>
</comment>
<comment type="similarity">
    <text evidence="3">Belongs to the aspartate/ornithine carbamoyltransferase superfamily. OTCase family.</text>
</comment>
<dbReference type="EC" id="2.1.3.3"/>
<dbReference type="EMBL" id="AF031518">
    <property type="protein sequence ID" value="AAD01932.1"/>
    <property type="molecule type" value="Genomic_DNA"/>
</dbReference>
<dbReference type="EMBL" id="AF049897">
    <property type="protein sequence ID" value="AAC24816.1"/>
    <property type="molecule type" value="Genomic_DNA"/>
</dbReference>
<dbReference type="EMBL" id="BA000036">
    <property type="protein sequence ID" value="BAB98791.1"/>
    <property type="molecule type" value="Genomic_DNA"/>
</dbReference>
<dbReference type="EMBL" id="BX927152">
    <property type="protein sequence ID" value="CAF21409.1"/>
    <property type="molecule type" value="Genomic_DNA"/>
</dbReference>
<dbReference type="EMBL" id="X86157">
    <property type="protein sequence ID" value="CAA60100.1"/>
    <property type="molecule type" value="Genomic_DNA"/>
</dbReference>
<dbReference type="RefSeq" id="NP_600617.1">
    <property type="nucleotide sequence ID" value="NC_003450.3"/>
</dbReference>
<dbReference type="RefSeq" id="WP_011014335.1">
    <property type="nucleotide sequence ID" value="NC_006958.1"/>
</dbReference>
<dbReference type="SMR" id="Q59283"/>
<dbReference type="STRING" id="196627.cg1584"/>
<dbReference type="GeneID" id="1019374"/>
<dbReference type="KEGG" id="cgb:cg1584"/>
<dbReference type="KEGG" id="cgl:Cgl1398"/>
<dbReference type="PATRIC" id="fig|196627.13.peg.1367"/>
<dbReference type="eggNOG" id="COG0078">
    <property type="taxonomic scope" value="Bacteria"/>
</dbReference>
<dbReference type="HOGENOM" id="CLU_043846_3_2_11"/>
<dbReference type="OrthoDB" id="9802587at2"/>
<dbReference type="BioCyc" id="CORYNE:G18NG-10977-MONOMER"/>
<dbReference type="UniPathway" id="UPA00068">
    <property type="reaction ID" value="UER00112"/>
</dbReference>
<dbReference type="Proteomes" id="UP000000582">
    <property type="component" value="Chromosome"/>
</dbReference>
<dbReference type="Proteomes" id="UP000001009">
    <property type="component" value="Chromosome"/>
</dbReference>
<dbReference type="GO" id="GO:0005737">
    <property type="term" value="C:cytoplasm"/>
    <property type="evidence" value="ECO:0007669"/>
    <property type="project" value="UniProtKB-SubCell"/>
</dbReference>
<dbReference type="GO" id="GO:0016597">
    <property type="term" value="F:amino acid binding"/>
    <property type="evidence" value="ECO:0007669"/>
    <property type="project" value="InterPro"/>
</dbReference>
<dbReference type="GO" id="GO:0004585">
    <property type="term" value="F:ornithine carbamoyltransferase activity"/>
    <property type="evidence" value="ECO:0007669"/>
    <property type="project" value="UniProtKB-UniRule"/>
</dbReference>
<dbReference type="GO" id="GO:0042450">
    <property type="term" value="P:arginine biosynthetic process via ornithine"/>
    <property type="evidence" value="ECO:0007669"/>
    <property type="project" value="TreeGrafter"/>
</dbReference>
<dbReference type="GO" id="GO:0019240">
    <property type="term" value="P:citrulline biosynthetic process"/>
    <property type="evidence" value="ECO:0007669"/>
    <property type="project" value="TreeGrafter"/>
</dbReference>
<dbReference type="GO" id="GO:0006526">
    <property type="term" value="P:L-arginine biosynthetic process"/>
    <property type="evidence" value="ECO:0007669"/>
    <property type="project" value="UniProtKB-UniRule"/>
</dbReference>
<dbReference type="FunFam" id="3.40.50.1370:FF:000008">
    <property type="entry name" value="Ornithine carbamoyltransferase"/>
    <property type="match status" value="1"/>
</dbReference>
<dbReference type="Gene3D" id="3.40.50.1370">
    <property type="entry name" value="Aspartate/ornithine carbamoyltransferase"/>
    <property type="match status" value="2"/>
</dbReference>
<dbReference type="HAMAP" id="MF_01109">
    <property type="entry name" value="OTCase"/>
    <property type="match status" value="1"/>
</dbReference>
<dbReference type="InterPro" id="IPR006132">
    <property type="entry name" value="Asp/Orn_carbamoyltranf_P-bd"/>
</dbReference>
<dbReference type="InterPro" id="IPR006130">
    <property type="entry name" value="Asp/Orn_carbamoylTrfase"/>
</dbReference>
<dbReference type="InterPro" id="IPR036901">
    <property type="entry name" value="Asp/Orn_carbamoylTrfase_sf"/>
</dbReference>
<dbReference type="InterPro" id="IPR006131">
    <property type="entry name" value="Asp_carbamoyltransf_Asp/Orn-bd"/>
</dbReference>
<dbReference type="InterPro" id="IPR002292">
    <property type="entry name" value="Orn/put_carbamltrans"/>
</dbReference>
<dbReference type="InterPro" id="IPR024904">
    <property type="entry name" value="OTCase_ArgI"/>
</dbReference>
<dbReference type="NCBIfam" id="TIGR00658">
    <property type="entry name" value="orni_carb_tr"/>
    <property type="match status" value="1"/>
</dbReference>
<dbReference type="NCBIfam" id="NF001986">
    <property type="entry name" value="PRK00779.1"/>
    <property type="match status" value="1"/>
</dbReference>
<dbReference type="PANTHER" id="PTHR45753">
    <property type="entry name" value="ORNITHINE CARBAMOYLTRANSFERASE, MITOCHONDRIAL"/>
    <property type="match status" value="1"/>
</dbReference>
<dbReference type="PANTHER" id="PTHR45753:SF3">
    <property type="entry name" value="ORNITHINE TRANSCARBAMYLASE, MITOCHONDRIAL"/>
    <property type="match status" value="1"/>
</dbReference>
<dbReference type="Pfam" id="PF00185">
    <property type="entry name" value="OTCace"/>
    <property type="match status" value="1"/>
</dbReference>
<dbReference type="Pfam" id="PF02729">
    <property type="entry name" value="OTCace_N"/>
    <property type="match status" value="1"/>
</dbReference>
<dbReference type="PRINTS" id="PR00100">
    <property type="entry name" value="AOTCASE"/>
</dbReference>
<dbReference type="PRINTS" id="PR00102">
    <property type="entry name" value="OTCASE"/>
</dbReference>
<dbReference type="SUPFAM" id="SSF53671">
    <property type="entry name" value="Aspartate/ornithine carbamoyltransferase"/>
    <property type="match status" value="1"/>
</dbReference>
<dbReference type="PROSITE" id="PS00097">
    <property type="entry name" value="CARBAMOYLTRANSFERASE"/>
    <property type="match status" value="1"/>
</dbReference>
<organism>
    <name type="scientific">Corynebacterium glutamicum (strain ATCC 13032 / DSM 20300 / JCM 1318 / BCRC 11384 / CCUG 27702 / LMG 3730 / NBRC 12168 / NCIMB 10025 / NRRL B-2784 / 534)</name>
    <dbReference type="NCBI Taxonomy" id="196627"/>
    <lineage>
        <taxon>Bacteria</taxon>
        <taxon>Bacillati</taxon>
        <taxon>Actinomycetota</taxon>
        <taxon>Actinomycetes</taxon>
        <taxon>Mycobacteriales</taxon>
        <taxon>Corynebacteriaceae</taxon>
        <taxon>Corynebacterium</taxon>
    </lineage>
</organism>
<gene>
    <name type="primary">argF</name>
    <name type="ordered locus">Cgl1398</name>
    <name type="ordered locus">cg1584</name>
</gene>
<reference key="1">
    <citation type="journal article" date="1999" name="Mol. Cells">
        <title>Cloning of the argF gene encoding the ornithine carbamoyltransferase from Corynebacterium glutamicum.</title>
        <authorList>
            <person name="Chun J.Y."/>
            <person name="Lee M.-S."/>
        </authorList>
    </citation>
    <scope>NUCLEOTIDE SEQUENCE [GENOMIC DNA]</scope>
    <source>
        <strain>ATCC 13059 / LMG 3658 / NCIB 10332 / AS019 / 613</strain>
    </source>
</reference>
<reference key="2">
    <citation type="journal article" date="2003" name="Appl. Microbiol. Biotechnol.">
        <title>The Corynebacterium glutamicum genome: features and impacts on biotechnological processes.</title>
        <authorList>
            <person name="Ikeda M."/>
            <person name="Nakagawa S."/>
        </authorList>
    </citation>
    <scope>NUCLEOTIDE SEQUENCE [LARGE SCALE GENOMIC DNA]</scope>
    <source>
        <strain>ATCC 13032 / DSM 20300 / JCM 1318 / BCRC 11384 / CCUG 27702 / LMG 3730 / NBRC 12168 / NCIMB 10025 / NRRL B-2784 / 534</strain>
    </source>
</reference>
<reference key="3">
    <citation type="journal article" date="2003" name="J. Biotechnol.">
        <title>The complete Corynebacterium glutamicum ATCC 13032 genome sequence and its impact on the production of L-aspartate-derived amino acids and vitamins.</title>
        <authorList>
            <person name="Kalinowski J."/>
            <person name="Bathe B."/>
            <person name="Bartels D."/>
            <person name="Bischoff N."/>
            <person name="Bott M."/>
            <person name="Burkovski A."/>
            <person name="Dusch N."/>
            <person name="Eggeling L."/>
            <person name="Eikmanns B.J."/>
            <person name="Gaigalat L."/>
            <person name="Goesmann A."/>
            <person name="Hartmann M."/>
            <person name="Huthmacher K."/>
            <person name="Kraemer R."/>
            <person name="Linke B."/>
            <person name="McHardy A.C."/>
            <person name="Meyer F."/>
            <person name="Moeckel B."/>
            <person name="Pfefferle W."/>
            <person name="Puehler A."/>
            <person name="Rey D.A."/>
            <person name="Rueckert C."/>
            <person name="Rupp O."/>
            <person name="Sahm H."/>
            <person name="Wendisch V.F."/>
            <person name="Wiegraebe I."/>
            <person name="Tauch A."/>
        </authorList>
    </citation>
    <scope>NUCLEOTIDE SEQUENCE [LARGE SCALE GENOMIC DNA]</scope>
    <source>
        <strain>ATCC 13032 / DSM 20300 / JCM 1318 / BCRC 11384 / CCUG 27702 / LMG 3730 / NBRC 12168 / NCIMB 10025 / NRRL B-2784 / 534</strain>
    </source>
</reference>
<reference key="4">
    <citation type="journal article" date="1996" name="Microbiology">
        <title>Genes and enzymes of the acetyl cycle of arginine biosynthesis in Corynebacterium glutamicum: enzyme evolution in the early steps of the arginine pathway.</title>
        <authorList>
            <person name="Sakanyan V."/>
            <person name="Petrosyan P."/>
            <person name="Lecocq M."/>
            <person name="Boyen A."/>
            <person name="Legrain C."/>
            <person name="Demarez M.N."/>
            <person name="Hallet J.-N."/>
            <person name="Glansdorff N."/>
        </authorList>
    </citation>
    <scope>NUCLEOTIDE SEQUENCE [GENOMIC DNA] OF 1-201</scope>
    <source>
        <strain>ATCC 13032 / DSM 20300 / JCM 1318 / BCRC 11384 / CCUG 27702 / LMG 3730 / NBRC 12168 / NCIMB 10025 / NRRL B-2784 / 534</strain>
    </source>
</reference>
<keyword id="KW-0028">Amino-acid biosynthesis</keyword>
<keyword id="KW-0055">Arginine biosynthesis</keyword>
<keyword id="KW-0963">Cytoplasm</keyword>
<keyword id="KW-1185">Reference proteome</keyword>
<keyword id="KW-0808">Transferase</keyword>